<evidence type="ECO:0000250" key="1">
    <source>
        <dbReference type="UniProtKB" id="O09100"/>
    </source>
</evidence>
<evidence type="ECO:0000255" key="2">
    <source>
        <dbReference type="PROSITE-ProRule" id="PRU00094"/>
    </source>
</evidence>
<evidence type="ECO:0000256" key="3">
    <source>
        <dbReference type="SAM" id="MobiDB-lite"/>
    </source>
</evidence>
<evidence type="ECO:0000269" key="4">
    <source>
    </source>
</evidence>
<evidence type="ECO:0000269" key="5">
    <source>
    </source>
</evidence>
<evidence type="ECO:0000269" key="6">
    <source>
    </source>
</evidence>
<evidence type="ECO:0000269" key="7">
    <source>
    </source>
</evidence>
<evidence type="ECO:0000269" key="8">
    <source>
    </source>
</evidence>
<evidence type="ECO:0000269" key="9">
    <source>
    </source>
</evidence>
<evidence type="ECO:0000269" key="10">
    <source ref="3"/>
</evidence>
<evidence type="ECO:0000303" key="11">
    <source>
    </source>
</evidence>
<evidence type="ECO:0000305" key="12"/>
<evidence type="ECO:0007744" key="13">
    <source>
    </source>
</evidence>
<evidence type="ECO:0007744" key="14">
    <source>
    </source>
</evidence>
<evidence type="ECO:0007744" key="15">
    <source>
    </source>
</evidence>
<evidence type="ECO:0007829" key="16">
    <source>
        <dbReference type="PDB" id="5O9B"/>
    </source>
</evidence>
<evidence type="ECO:0007829" key="17">
    <source>
        <dbReference type="PDB" id="6ZFV"/>
    </source>
</evidence>
<accession>P23769</accession>
<accession>D3DNB3</accession>
<accession>Q53YE0</accession>
<accession>Q96BH0</accession>
<accession>Q96BH8</accession>
<accession>Q9BUJ6</accession>
<protein>
    <recommendedName>
        <fullName>Endothelial transcription factor GATA-2</fullName>
    </recommendedName>
    <alternativeName>
        <fullName>GATA-binding protein 2</fullName>
    </alternativeName>
</protein>
<keyword id="KW-0002">3D-structure</keyword>
<keyword id="KW-0010">Activator</keyword>
<keyword id="KW-0025">Alternative splicing</keyword>
<keyword id="KW-0225">Disease variant</keyword>
<keyword id="KW-0238">DNA-binding</keyword>
<keyword id="KW-1017">Isopeptide bond</keyword>
<keyword id="KW-0479">Metal-binding</keyword>
<keyword id="KW-0488">Methylation</keyword>
<keyword id="KW-0539">Nucleus</keyword>
<keyword id="KW-0581">Phagocytosis</keyword>
<keyword id="KW-0597">Phosphoprotein</keyword>
<keyword id="KW-1267">Proteomics identification</keyword>
<keyword id="KW-1185">Reference proteome</keyword>
<keyword id="KW-0677">Repeat</keyword>
<keyword id="KW-0804">Transcription</keyword>
<keyword id="KW-0805">Transcription regulation</keyword>
<keyword id="KW-0832">Ubl conjugation</keyword>
<keyword id="KW-0862">Zinc</keyword>
<keyword id="KW-0863">Zinc-finger</keyword>
<dbReference type="EMBL" id="M68891">
    <property type="protein sequence ID" value="AAA35868.1"/>
    <property type="molecule type" value="mRNA"/>
</dbReference>
<dbReference type="EMBL" id="M77810">
    <property type="protein sequence ID" value="AAA35869.1"/>
    <property type="status" value="ALT_SEQ"/>
    <property type="molecule type" value="mRNA"/>
</dbReference>
<dbReference type="EMBL" id="BT006671">
    <property type="protein sequence ID" value="AAP35317.1"/>
    <property type="molecule type" value="mRNA"/>
</dbReference>
<dbReference type="EMBL" id="AK314826">
    <property type="protein sequence ID" value="BAG37347.1"/>
    <property type="molecule type" value="mRNA"/>
</dbReference>
<dbReference type="EMBL" id="AC080005">
    <property type="status" value="NOT_ANNOTATED_CDS"/>
    <property type="molecule type" value="Genomic_DNA"/>
</dbReference>
<dbReference type="EMBL" id="CH471052">
    <property type="protein sequence ID" value="EAW79313.1"/>
    <property type="molecule type" value="Genomic_DNA"/>
</dbReference>
<dbReference type="EMBL" id="CH471052">
    <property type="protein sequence ID" value="EAW79314.1"/>
    <property type="molecule type" value="Genomic_DNA"/>
</dbReference>
<dbReference type="EMBL" id="CH471052">
    <property type="protein sequence ID" value="EAW79315.1"/>
    <property type="molecule type" value="Genomic_DNA"/>
</dbReference>
<dbReference type="EMBL" id="CH471052">
    <property type="protein sequence ID" value="EAW79316.1"/>
    <property type="molecule type" value="Genomic_DNA"/>
</dbReference>
<dbReference type="EMBL" id="CH471052">
    <property type="protein sequence ID" value="EAW79317.1"/>
    <property type="molecule type" value="Genomic_DNA"/>
</dbReference>
<dbReference type="EMBL" id="BC002557">
    <property type="protein sequence ID" value="AAH02557.1"/>
    <property type="molecule type" value="mRNA"/>
</dbReference>
<dbReference type="EMBL" id="BC015613">
    <property type="protein sequence ID" value="AAH15613.1"/>
    <property type="molecule type" value="mRNA"/>
</dbReference>
<dbReference type="EMBL" id="BC015577">
    <property type="protein sequence ID" value="AAH15577.1"/>
    <property type="molecule type" value="mRNA"/>
</dbReference>
<dbReference type="EMBL" id="BC018988">
    <property type="protein sequence ID" value="AAH18988.1"/>
    <property type="molecule type" value="mRNA"/>
</dbReference>
<dbReference type="EMBL" id="BC051272">
    <property type="protein sequence ID" value="AAH51272.1"/>
    <property type="molecule type" value="mRNA"/>
</dbReference>
<dbReference type="EMBL" id="BC051342">
    <property type="protein sequence ID" value="AAH51342.1"/>
    <property type="molecule type" value="mRNA"/>
</dbReference>
<dbReference type="CCDS" id="CCDS3049.1">
    <molecule id="P23769-1"/>
</dbReference>
<dbReference type="CCDS" id="CCDS46903.1">
    <molecule id="P23769-2"/>
</dbReference>
<dbReference type="PIR" id="A40815">
    <property type="entry name" value="A40815"/>
</dbReference>
<dbReference type="PIR" id="A41782">
    <property type="entry name" value="A41782"/>
</dbReference>
<dbReference type="RefSeq" id="NP_001139133.1">
    <molecule id="P23769-1"/>
    <property type="nucleotide sequence ID" value="NM_001145661.2"/>
</dbReference>
<dbReference type="RefSeq" id="NP_001139134.1">
    <molecule id="P23769-2"/>
    <property type="nucleotide sequence ID" value="NM_001145662.1"/>
</dbReference>
<dbReference type="RefSeq" id="NP_116027.2">
    <molecule id="P23769-1"/>
    <property type="nucleotide sequence ID" value="NM_032638.4"/>
</dbReference>
<dbReference type="PDB" id="5O9B">
    <property type="method" value="NMR"/>
    <property type="chains" value="A=343-391"/>
</dbReference>
<dbReference type="PDB" id="6ZFV">
    <property type="method" value="NMR"/>
    <property type="chains" value="A=291-334"/>
</dbReference>
<dbReference type="PDBsum" id="5O9B"/>
<dbReference type="PDBsum" id="6ZFV"/>
<dbReference type="SMR" id="P23769"/>
<dbReference type="BioGRID" id="108894">
    <property type="interactions" value="217"/>
</dbReference>
<dbReference type="CORUM" id="P23769"/>
<dbReference type="DIP" id="DIP-29711N"/>
<dbReference type="FunCoup" id="P23769">
    <property type="interactions" value="4345"/>
</dbReference>
<dbReference type="IntAct" id="P23769">
    <property type="interactions" value="172"/>
</dbReference>
<dbReference type="STRING" id="9606.ENSP00000345681"/>
<dbReference type="ChEMBL" id="CHEMBL4523206"/>
<dbReference type="GlyGen" id="P23769">
    <property type="glycosylation" value="8 sites, 1 O-linked glycan (5 sites)"/>
</dbReference>
<dbReference type="iPTMnet" id="P23769"/>
<dbReference type="PhosphoSitePlus" id="P23769"/>
<dbReference type="BioMuta" id="GATA2"/>
<dbReference type="DMDM" id="229462971"/>
<dbReference type="jPOST" id="P23769"/>
<dbReference type="MassIVE" id="P23769"/>
<dbReference type="PaxDb" id="9606-ENSP00000345681"/>
<dbReference type="PeptideAtlas" id="P23769"/>
<dbReference type="ProteomicsDB" id="54160">
    <molecule id="P23769-1"/>
</dbReference>
<dbReference type="ProteomicsDB" id="54161">
    <molecule id="P23769-2"/>
</dbReference>
<dbReference type="Pumba" id="P23769"/>
<dbReference type="Antibodypedia" id="788">
    <property type="antibodies" value="480 antibodies from 37 providers"/>
</dbReference>
<dbReference type="DNASU" id="2624"/>
<dbReference type="Ensembl" id="ENST00000341105.7">
    <molecule id="P23769-1"/>
    <property type="protein sequence ID" value="ENSP00000345681.2"/>
    <property type="gene ID" value="ENSG00000179348.13"/>
</dbReference>
<dbReference type="Ensembl" id="ENST00000430265.6">
    <molecule id="P23769-2"/>
    <property type="protein sequence ID" value="ENSP00000400259.2"/>
    <property type="gene ID" value="ENSG00000179348.13"/>
</dbReference>
<dbReference type="Ensembl" id="ENST00000487848.6">
    <molecule id="P23769-1"/>
    <property type="protein sequence ID" value="ENSP00000417074.1"/>
    <property type="gene ID" value="ENSG00000179348.13"/>
</dbReference>
<dbReference type="GeneID" id="2624"/>
<dbReference type="KEGG" id="hsa:2624"/>
<dbReference type="MANE-Select" id="ENST00000341105.7">
    <property type="protein sequence ID" value="ENSP00000345681.2"/>
    <property type="RefSeq nucleotide sequence ID" value="NM_032638.5"/>
    <property type="RefSeq protein sequence ID" value="NP_116027.2"/>
</dbReference>
<dbReference type="UCSC" id="uc003ekm.4">
    <molecule id="P23769-1"/>
    <property type="organism name" value="human"/>
</dbReference>
<dbReference type="AGR" id="HGNC:4171"/>
<dbReference type="CTD" id="2624"/>
<dbReference type="DisGeNET" id="2624"/>
<dbReference type="GeneCards" id="GATA2"/>
<dbReference type="HGNC" id="HGNC:4171">
    <property type="gene designation" value="GATA2"/>
</dbReference>
<dbReference type="HPA" id="ENSG00000179348">
    <property type="expression patterns" value="Low tissue specificity"/>
</dbReference>
<dbReference type="MalaCards" id="GATA2"/>
<dbReference type="MIM" id="137295">
    <property type="type" value="gene"/>
</dbReference>
<dbReference type="MIM" id="614038">
    <property type="type" value="phenotype"/>
</dbReference>
<dbReference type="MIM" id="614172">
    <property type="type" value="phenotype"/>
</dbReference>
<dbReference type="MIM" id="614286">
    <property type="type" value="phenotype"/>
</dbReference>
<dbReference type="neXtProt" id="NX_P23769"/>
<dbReference type="OpenTargets" id="ENSG00000179348"/>
<dbReference type="Orphanet" id="228423">
    <property type="disease" value="GATA2 deficiency spectrum"/>
</dbReference>
<dbReference type="PharmGKB" id="PA28585"/>
<dbReference type="VEuPathDB" id="HostDB:ENSG00000179348"/>
<dbReference type="eggNOG" id="KOG1601">
    <property type="taxonomic scope" value="Eukaryota"/>
</dbReference>
<dbReference type="GeneTree" id="ENSGT00940000156315"/>
<dbReference type="HOGENOM" id="CLU_027524_1_0_1"/>
<dbReference type="InParanoid" id="P23769"/>
<dbReference type="OMA" id="SKCMHEK"/>
<dbReference type="OrthoDB" id="2162994at2759"/>
<dbReference type="PAN-GO" id="P23769">
    <property type="GO annotations" value="7 GO annotations based on evolutionary models"/>
</dbReference>
<dbReference type="PhylomeDB" id="P23769"/>
<dbReference type="TreeFam" id="TF315391"/>
<dbReference type="PathwayCommons" id="P23769"/>
<dbReference type="Reactome" id="R-HSA-8939236">
    <property type="pathway name" value="RUNX1 regulates transcription of genes involved in differentiation of HSCs"/>
</dbReference>
<dbReference type="Reactome" id="R-HSA-9616222">
    <property type="pathway name" value="Transcriptional regulation of granulopoiesis"/>
</dbReference>
<dbReference type="Reactome" id="R-HSA-983231">
    <property type="pathway name" value="Factors involved in megakaryocyte development and platelet production"/>
</dbReference>
<dbReference type="SignaLink" id="P23769"/>
<dbReference type="SIGNOR" id="P23769"/>
<dbReference type="BioGRID-ORCS" id="2624">
    <property type="hits" value="34 hits in 1193 CRISPR screens"/>
</dbReference>
<dbReference type="CD-CODE" id="178CF9FC">
    <property type="entry name" value="Synthetic Condensate 000200"/>
</dbReference>
<dbReference type="CD-CODE" id="77377E79">
    <property type="entry name" value="Synthetic Condensate 000190"/>
</dbReference>
<dbReference type="ChiTaRS" id="GATA2">
    <property type="organism name" value="human"/>
</dbReference>
<dbReference type="GeneWiki" id="GATA2"/>
<dbReference type="GenomeRNAi" id="2624"/>
<dbReference type="Pharos" id="P23769">
    <property type="development level" value="Tbio"/>
</dbReference>
<dbReference type="PRO" id="PR:P23769"/>
<dbReference type="Proteomes" id="UP000005640">
    <property type="component" value="Chromosome 3"/>
</dbReference>
<dbReference type="RNAct" id="P23769">
    <property type="molecule type" value="protein"/>
</dbReference>
<dbReference type="Bgee" id="ENSG00000179348">
    <property type="expression patterns" value="Expressed in seminal vesicle and 199 other cell types or tissues"/>
</dbReference>
<dbReference type="ExpressionAtlas" id="P23769">
    <property type="expression patterns" value="baseline and differential"/>
</dbReference>
<dbReference type="GO" id="GO:0005737">
    <property type="term" value="C:cytoplasm"/>
    <property type="evidence" value="ECO:0000314"/>
    <property type="project" value="BHF-UCL"/>
</dbReference>
<dbReference type="GO" id="GO:0005654">
    <property type="term" value="C:nucleoplasm"/>
    <property type="evidence" value="ECO:0000314"/>
    <property type="project" value="HPA"/>
</dbReference>
<dbReference type="GO" id="GO:0005634">
    <property type="term" value="C:nucleus"/>
    <property type="evidence" value="ECO:0000314"/>
    <property type="project" value="BHF-UCL"/>
</dbReference>
<dbReference type="GO" id="GO:0005667">
    <property type="term" value="C:transcription regulator complex"/>
    <property type="evidence" value="ECO:0007669"/>
    <property type="project" value="Ensembl"/>
</dbReference>
<dbReference type="GO" id="GO:0070742">
    <property type="term" value="F:C2H2 zinc finger domain binding"/>
    <property type="evidence" value="ECO:0000353"/>
    <property type="project" value="BHF-UCL"/>
</dbReference>
<dbReference type="GO" id="GO:0003682">
    <property type="term" value="F:chromatin binding"/>
    <property type="evidence" value="ECO:0000314"/>
    <property type="project" value="MGI"/>
</dbReference>
<dbReference type="GO" id="GO:0001228">
    <property type="term" value="F:DNA-binding transcription activator activity, RNA polymerase II-specific"/>
    <property type="evidence" value="ECO:0007669"/>
    <property type="project" value="Ensembl"/>
</dbReference>
<dbReference type="GO" id="GO:0003700">
    <property type="term" value="F:DNA-binding transcription factor activity"/>
    <property type="evidence" value="ECO:0000314"/>
    <property type="project" value="UniProtKB"/>
</dbReference>
<dbReference type="GO" id="GO:0000981">
    <property type="term" value="F:DNA-binding transcription factor activity, RNA polymerase II-specific"/>
    <property type="evidence" value="ECO:0000314"/>
    <property type="project" value="BHF-UCL"/>
</dbReference>
<dbReference type="GO" id="GO:0000978">
    <property type="term" value="F:RNA polymerase II cis-regulatory region sequence-specific DNA binding"/>
    <property type="evidence" value="ECO:0000318"/>
    <property type="project" value="GO_Central"/>
</dbReference>
<dbReference type="GO" id="GO:0061629">
    <property type="term" value="F:RNA polymerase II-specific DNA-binding transcription factor binding"/>
    <property type="evidence" value="ECO:0000353"/>
    <property type="project" value="BHF-UCL"/>
</dbReference>
<dbReference type="GO" id="GO:1990837">
    <property type="term" value="F:sequence-specific double-stranded DNA binding"/>
    <property type="evidence" value="ECO:0000314"/>
    <property type="project" value="ARUK-UCL"/>
</dbReference>
<dbReference type="GO" id="GO:0001223">
    <property type="term" value="F:transcription coactivator binding"/>
    <property type="evidence" value="ECO:0007669"/>
    <property type="project" value="Ensembl"/>
</dbReference>
<dbReference type="GO" id="GO:0001221">
    <property type="term" value="F:transcription coregulator binding"/>
    <property type="evidence" value="ECO:0000353"/>
    <property type="project" value="BHF-UCL"/>
</dbReference>
<dbReference type="GO" id="GO:0008270">
    <property type="term" value="F:zinc ion binding"/>
    <property type="evidence" value="ECO:0007669"/>
    <property type="project" value="UniProtKB-KW"/>
</dbReference>
<dbReference type="GO" id="GO:0050873">
    <property type="term" value="P:brown fat cell differentiation"/>
    <property type="evidence" value="ECO:0007669"/>
    <property type="project" value="Ensembl"/>
</dbReference>
<dbReference type="GO" id="GO:0021533">
    <property type="term" value="P:cell differentiation in hindbrain"/>
    <property type="evidence" value="ECO:0007669"/>
    <property type="project" value="Ensembl"/>
</dbReference>
<dbReference type="GO" id="GO:0045165">
    <property type="term" value="P:cell fate commitment"/>
    <property type="evidence" value="ECO:0000318"/>
    <property type="project" value="GO_Central"/>
</dbReference>
<dbReference type="GO" id="GO:0001709">
    <property type="term" value="P:cell fate determination"/>
    <property type="evidence" value="ECO:0007669"/>
    <property type="project" value="Ensembl"/>
</dbReference>
<dbReference type="GO" id="GO:0021954">
    <property type="term" value="P:central nervous system neuron development"/>
    <property type="evidence" value="ECO:0007669"/>
    <property type="project" value="Ensembl"/>
</dbReference>
<dbReference type="GO" id="GO:0090102">
    <property type="term" value="P:cochlea development"/>
    <property type="evidence" value="ECO:0007669"/>
    <property type="project" value="Ensembl"/>
</dbReference>
<dbReference type="GO" id="GO:0021902">
    <property type="term" value="P:commitment of neuronal cell to specific neuron type in forebrain"/>
    <property type="evidence" value="ECO:0007669"/>
    <property type="project" value="Ensembl"/>
</dbReference>
<dbReference type="GO" id="GO:0060216">
    <property type="term" value="P:definitive hemopoiesis"/>
    <property type="evidence" value="ECO:0007669"/>
    <property type="project" value="Ensembl"/>
</dbReference>
<dbReference type="GO" id="GO:0001892">
    <property type="term" value="P:embryonic placenta development"/>
    <property type="evidence" value="ECO:0007669"/>
    <property type="project" value="Ensembl"/>
</dbReference>
<dbReference type="GO" id="GO:0035854">
    <property type="term" value="P:eosinophil fate commitment"/>
    <property type="evidence" value="ECO:0000314"/>
    <property type="project" value="BHF-UCL"/>
</dbReference>
<dbReference type="GO" id="GO:0045444">
    <property type="term" value="P:fat cell differentiation"/>
    <property type="evidence" value="ECO:0000315"/>
    <property type="project" value="UniProtKB"/>
</dbReference>
<dbReference type="GO" id="GO:0097154">
    <property type="term" value="P:GABAergic neuron differentiation"/>
    <property type="evidence" value="ECO:0007669"/>
    <property type="project" value="Ensembl"/>
</dbReference>
<dbReference type="GO" id="GO:0002071">
    <property type="term" value="P:glandular epithelial cell maturation"/>
    <property type="evidence" value="ECO:0007669"/>
    <property type="project" value="Ensembl"/>
</dbReference>
<dbReference type="GO" id="GO:0002244">
    <property type="term" value="P:hematopoietic progenitor cell differentiation"/>
    <property type="evidence" value="ECO:0007669"/>
    <property type="project" value="Ensembl"/>
</dbReference>
<dbReference type="GO" id="GO:0061484">
    <property type="term" value="P:hematopoietic stem cell homeostasis"/>
    <property type="evidence" value="ECO:0007669"/>
    <property type="project" value="Ensembl"/>
</dbReference>
<dbReference type="GO" id="GO:0048873">
    <property type="term" value="P:homeostasis of number of cells within a tissue"/>
    <property type="evidence" value="ECO:0007669"/>
    <property type="project" value="Ensembl"/>
</dbReference>
<dbReference type="GO" id="GO:0042472">
    <property type="term" value="P:inner ear morphogenesis"/>
    <property type="evidence" value="ECO:0007669"/>
    <property type="project" value="Ensembl"/>
</dbReference>
<dbReference type="GO" id="GO:1903444">
    <property type="term" value="P:negative regulation of brown fat cell differentiation"/>
    <property type="evidence" value="ECO:0007669"/>
    <property type="project" value="Ensembl"/>
</dbReference>
<dbReference type="GO" id="GO:2000352">
    <property type="term" value="P:negative regulation of endothelial cell apoptotic process"/>
    <property type="evidence" value="ECO:0000315"/>
    <property type="project" value="BHF-UCL"/>
</dbReference>
<dbReference type="GO" id="GO:0010629">
    <property type="term" value="P:negative regulation of gene expression"/>
    <property type="evidence" value="ECO:0000315"/>
    <property type="project" value="BHF-UCL"/>
</dbReference>
<dbReference type="GO" id="GO:1901533">
    <property type="term" value="P:negative regulation of hematopoietic progenitor cell differentiation"/>
    <property type="evidence" value="ECO:0007669"/>
    <property type="project" value="Ensembl"/>
</dbReference>
<dbReference type="GO" id="GO:0045650">
    <property type="term" value="P:negative regulation of macrophage differentiation"/>
    <property type="evidence" value="ECO:0007669"/>
    <property type="project" value="Ensembl"/>
</dbReference>
<dbReference type="GO" id="GO:2000178">
    <property type="term" value="P:negative regulation of neural precursor cell proliferation"/>
    <property type="evidence" value="ECO:0000314"/>
    <property type="project" value="MGI"/>
</dbReference>
<dbReference type="GO" id="GO:0007406">
    <property type="term" value="P:negative regulation of neuroblast proliferation"/>
    <property type="evidence" value="ECO:0007669"/>
    <property type="project" value="Ensembl"/>
</dbReference>
<dbReference type="GO" id="GO:0045746">
    <property type="term" value="P:negative regulation of Notch signaling pathway"/>
    <property type="evidence" value="ECO:0000314"/>
    <property type="project" value="MGI"/>
</dbReference>
<dbReference type="GO" id="GO:0000122">
    <property type="term" value="P:negative regulation of transcription by RNA polymerase II"/>
    <property type="evidence" value="ECO:0000318"/>
    <property type="project" value="GO_Central"/>
</dbReference>
<dbReference type="GO" id="GO:0007405">
    <property type="term" value="P:neuroblast proliferation"/>
    <property type="evidence" value="ECO:0007669"/>
    <property type="project" value="Ensembl"/>
</dbReference>
<dbReference type="GO" id="GO:0042551">
    <property type="term" value="P:neuron maturation"/>
    <property type="evidence" value="ECO:0007669"/>
    <property type="project" value="Ensembl"/>
</dbReference>
<dbReference type="GO" id="GO:0001764">
    <property type="term" value="P:neuron migration"/>
    <property type="evidence" value="ECO:0007669"/>
    <property type="project" value="Ensembl"/>
</dbReference>
<dbReference type="GO" id="GO:0006909">
    <property type="term" value="P:phagocytosis"/>
    <property type="evidence" value="ECO:0007669"/>
    <property type="project" value="UniProtKB-KW"/>
</dbReference>
<dbReference type="GO" id="GO:0045766">
    <property type="term" value="P:positive regulation of angiogenesis"/>
    <property type="evidence" value="ECO:0000314"/>
    <property type="project" value="MGI"/>
</dbReference>
<dbReference type="GO" id="GO:0043536">
    <property type="term" value="P:positive regulation of blood vessel endothelial cell migration"/>
    <property type="evidence" value="ECO:0000315"/>
    <property type="project" value="BHF-UCL"/>
</dbReference>
<dbReference type="GO" id="GO:1903589">
    <property type="term" value="P:positive regulation of blood vessel endothelial cell proliferation involved in sprouting angiogenesis"/>
    <property type="evidence" value="ECO:0000315"/>
    <property type="project" value="BHF-UCL"/>
</dbReference>
<dbReference type="GO" id="GO:0090050">
    <property type="term" value="P:positive regulation of cell migration involved in sprouting angiogenesis"/>
    <property type="evidence" value="ECO:0000315"/>
    <property type="project" value="BHF-UCL"/>
</dbReference>
<dbReference type="GO" id="GO:0007204">
    <property type="term" value="P:positive regulation of cytosolic calcium ion concentration"/>
    <property type="evidence" value="ECO:0007669"/>
    <property type="project" value="Ensembl"/>
</dbReference>
<dbReference type="GO" id="GO:0045648">
    <property type="term" value="P:positive regulation of erythrocyte differentiation"/>
    <property type="evidence" value="ECO:0007669"/>
    <property type="project" value="Ensembl"/>
</dbReference>
<dbReference type="GO" id="GO:0010628">
    <property type="term" value="P:positive regulation of gene expression"/>
    <property type="evidence" value="ECO:0000315"/>
    <property type="project" value="BHF-UCL"/>
</dbReference>
<dbReference type="GO" id="GO:0043306">
    <property type="term" value="P:positive regulation of mast cell degranulation"/>
    <property type="evidence" value="ECO:0007669"/>
    <property type="project" value="Ensembl"/>
</dbReference>
<dbReference type="GO" id="GO:0045654">
    <property type="term" value="P:positive regulation of megakaryocyte differentiation"/>
    <property type="evidence" value="ECO:0007669"/>
    <property type="project" value="Ensembl"/>
</dbReference>
<dbReference type="GO" id="GO:1902895">
    <property type="term" value="P:positive regulation of miRNA transcription"/>
    <property type="evidence" value="ECO:0000314"/>
    <property type="project" value="BHF-UCL"/>
</dbReference>
<dbReference type="GO" id="GO:0045666">
    <property type="term" value="P:positive regulation of neuron differentiation"/>
    <property type="evidence" value="ECO:0007669"/>
    <property type="project" value="Ensembl"/>
</dbReference>
<dbReference type="GO" id="GO:0050766">
    <property type="term" value="P:positive regulation of phagocytosis"/>
    <property type="evidence" value="ECO:0000250"/>
    <property type="project" value="UniProtKB"/>
</dbReference>
<dbReference type="GO" id="GO:0060100">
    <property type="term" value="P:positive regulation of phagocytosis, engulfment"/>
    <property type="evidence" value="ECO:0007669"/>
    <property type="project" value="Ensembl"/>
</dbReference>
<dbReference type="GO" id="GO:0045944">
    <property type="term" value="P:positive regulation of transcription by RNA polymerase II"/>
    <property type="evidence" value="ECO:0000314"/>
    <property type="project" value="UniProtKB"/>
</dbReference>
<dbReference type="GO" id="GO:2000977">
    <property type="term" value="P:regulation of forebrain neuron differentiation"/>
    <property type="evidence" value="ECO:0007669"/>
    <property type="project" value="Ensembl"/>
</dbReference>
<dbReference type="GO" id="GO:0010725">
    <property type="term" value="P:regulation of primitive erythrocyte differentiation"/>
    <property type="evidence" value="ECO:0007669"/>
    <property type="project" value="Ensembl"/>
</dbReference>
<dbReference type="GO" id="GO:0033993">
    <property type="term" value="P:response to lipid"/>
    <property type="evidence" value="ECO:0007669"/>
    <property type="project" value="Ensembl"/>
</dbReference>
<dbReference type="GO" id="GO:0060872">
    <property type="term" value="P:semicircular canal development"/>
    <property type="evidence" value="ECO:0007669"/>
    <property type="project" value="Ensembl"/>
</dbReference>
<dbReference type="GO" id="GO:0035019">
    <property type="term" value="P:somatic stem cell population maintenance"/>
    <property type="evidence" value="ECO:0007669"/>
    <property type="project" value="Ensembl"/>
</dbReference>
<dbReference type="GO" id="GO:0060129">
    <property type="term" value="P:thyroid-stimulating hormone-secreting cell differentiation"/>
    <property type="evidence" value="ECO:0007669"/>
    <property type="project" value="Ensembl"/>
</dbReference>
<dbReference type="GO" id="GO:0006366">
    <property type="term" value="P:transcription by RNA polymerase II"/>
    <property type="evidence" value="ECO:0007669"/>
    <property type="project" value="Ensembl"/>
</dbReference>
<dbReference type="GO" id="GO:0001655">
    <property type="term" value="P:urogenital system development"/>
    <property type="evidence" value="ECO:0007669"/>
    <property type="project" value="Ensembl"/>
</dbReference>
<dbReference type="GO" id="GO:0061042">
    <property type="term" value="P:vascular wound healing"/>
    <property type="evidence" value="ECO:0000315"/>
    <property type="project" value="BHF-UCL"/>
</dbReference>
<dbReference type="GO" id="GO:0021514">
    <property type="term" value="P:ventral spinal cord interneuron differentiation"/>
    <property type="evidence" value="ECO:0007669"/>
    <property type="project" value="Ensembl"/>
</dbReference>
<dbReference type="CDD" id="cd00202">
    <property type="entry name" value="ZnF_GATA"/>
    <property type="match status" value="2"/>
</dbReference>
<dbReference type="FunFam" id="3.30.50.10:FF:000001">
    <property type="entry name" value="GATA transcription factor (GATAd)"/>
    <property type="match status" value="1"/>
</dbReference>
<dbReference type="FunFam" id="3.30.50.10:FF:000032">
    <property type="entry name" value="Transcription factor GATA-3"/>
    <property type="match status" value="1"/>
</dbReference>
<dbReference type="Gene3D" id="3.30.50.10">
    <property type="entry name" value="Erythroid Transcription Factor GATA-1, subunit A"/>
    <property type="match status" value="2"/>
</dbReference>
<dbReference type="InterPro" id="IPR016374">
    <property type="entry name" value="TF_GATA-2/3"/>
</dbReference>
<dbReference type="InterPro" id="IPR039355">
    <property type="entry name" value="Transcription_factor_GATA"/>
</dbReference>
<dbReference type="InterPro" id="IPR000679">
    <property type="entry name" value="Znf_GATA"/>
</dbReference>
<dbReference type="InterPro" id="IPR013088">
    <property type="entry name" value="Znf_NHR/GATA"/>
</dbReference>
<dbReference type="PANTHER" id="PTHR10071:SF149">
    <property type="entry name" value="ENDOTHELIAL TRANSCRIPTION FACTOR GATA-2"/>
    <property type="match status" value="1"/>
</dbReference>
<dbReference type="PANTHER" id="PTHR10071">
    <property type="entry name" value="TRANSCRIPTION FACTOR GATA FAMILY MEMBER"/>
    <property type="match status" value="1"/>
</dbReference>
<dbReference type="Pfam" id="PF00320">
    <property type="entry name" value="GATA"/>
    <property type="match status" value="2"/>
</dbReference>
<dbReference type="PIRSF" id="PIRSF003027">
    <property type="entry name" value="TF_GATA-1/2/3"/>
    <property type="match status" value="1"/>
</dbReference>
<dbReference type="PRINTS" id="PR00619">
    <property type="entry name" value="GATAZNFINGER"/>
</dbReference>
<dbReference type="SMART" id="SM00401">
    <property type="entry name" value="ZnF_GATA"/>
    <property type="match status" value="2"/>
</dbReference>
<dbReference type="SUPFAM" id="SSF57716">
    <property type="entry name" value="Glucocorticoid receptor-like (DNA-binding domain)"/>
    <property type="match status" value="2"/>
</dbReference>
<dbReference type="PROSITE" id="PS00344">
    <property type="entry name" value="GATA_ZN_FINGER_1"/>
    <property type="match status" value="2"/>
</dbReference>
<dbReference type="PROSITE" id="PS50114">
    <property type="entry name" value="GATA_ZN_FINGER_2"/>
    <property type="match status" value="2"/>
</dbReference>
<name>GATA2_HUMAN</name>
<comment type="function">
    <text>Transcriptional activator which regulates endothelin-1 gene expression in endothelial cells. Binds to the consensus sequence 5'-AGATAG-3'.</text>
</comment>
<comment type="subunit">
    <text evidence="1 9">Interacts with BRD3 (By similarity). Interacts with AR and CCAR1. Interacts with MDFIC (By similarity).</text>
</comment>
<comment type="interaction">
    <interactant intactId="EBI-2806671">
        <id>P23769</id>
    </interactant>
    <interactant intactId="EBI-10173507">
        <id>Q6UY14-3</id>
        <label>ADAMTSL4</label>
    </interactant>
    <organismsDiffer>false</organismsDiffer>
    <experiments>3</experiments>
</comment>
<comment type="interaction">
    <interactant intactId="EBI-2806671">
        <id>P23769</id>
    </interactant>
    <interactant intactId="EBI-81215">
        <id>Q92793</id>
        <label>CREBBP</label>
    </interactant>
    <organismsDiffer>false</organismsDiffer>
    <experiments>2</experiments>
</comment>
<comment type="interaction">
    <interactant intactId="EBI-2806671">
        <id>P23769</id>
    </interactant>
    <interactant intactId="EBI-3867333">
        <id>A8MQ03</id>
        <label>CYSRT1</label>
    </interactant>
    <organismsDiffer>false</organismsDiffer>
    <experiments>3</experiments>
</comment>
<comment type="interaction">
    <interactant intactId="EBI-2806671">
        <id>P23769</id>
    </interactant>
    <interactant intactId="EBI-741101">
        <id>Q13643</id>
        <label>FHL3</label>
    </interactant>
    <organismsDiffer>false</organismsDiffer>
    <experiments>5</experiments>
</comment>
<comment type="interaction">
    <interactant intactId="EBI-2806671">
        <id>P23769</id>
    </interactant>
    <interactant intactId="EBI-618309">
        <id>Q08379</id>
        <label>GOLGA2</label>
    </interactant>
    <organismsDiffer>false</organismsDiffer>
    <experiments>4</experiments>
</comment>
<comment type="interaction">
    <interactant intactId="EBI-2806671">
        <id>P23769</id>
    </interactant>
    <interactant intactId="EBI-10171697">
        <id>Q6A162</id>
        <label>KRT40</label>
    </interactant>
    <organismsDiffer>false</organismsDiffer>
    <experiments>3</experiments>
</comment>
<comment type="interaction">
    <interactant intactId="EBI-2806671">
        <id>P23769</id>
    </interactant>
    <interactant intactId="EBI-10172052">
        <id>P60411</id>
        <label>KRTAP10-9</label>
    </interactant>
    <organismsDiffer>false</organismsDiffer>
    <experiments>3</experiments>
</comment>
<comment type="interaction">
    <interactant intactId="EBI-2806671">
        <id>P23769</id>
    </interactant>
    <interactant intactId="EBI-1052037">
        <id>Q8IUC1</id>
        <label>KRTAP11-1</label>
    </interactant>
    <organismsDiffer>false</organismsDiffer>
    <experiments>3</experiments>
</comment>
<comment type="interaction">
    <interactant intactId="EBI-2806671">
        <id>P23769</id>
    </interactant>
    <interactant intactId="EBI-10241252">
        <id>Q3SY46</id>
        <label>KRTAP13-3</label>
    </interactant>
    <organismsDiffer>false</organismsDiffer>
    <experiments>3</experiments>
</comment>
<comment type="interaction">
    <interactant intactId="EBI-2806671">
        <id>P23769</id>
    </interactant>
    <interactant intactId="EBI-18395721">
        <id>Q3LI59</id>
        <label>KRTAP21-2</label>
    </interactant>
    <organismsDiffer>false</organismsDiffer>
    <experiments>3</experiments>
</comment>
<comment type="interaction">
    <interactant intactId="EBI-2806671">
        <id>P23769</id>
    </interactant>
    <interactant intactId="EBI-9996449">
        <id>Q9BYR8</id>
        <label>KRTAP3-1</label>
    </interactant>
    <organismsDiffer>false</organismsDiffer>
    <experiments>3</experiments>
</comment>
<comment type="interaction">
    <interactant intactId="EBI-2806671">
        <id>P23769</id>
    </interactant>
    <interactant intactId="EBI-22311199">
        <id>Q3LI67</id>
        <label>KRTAP6-3</label>
    </interactant>
    <organismsDiffer>false</organismsDiffer>
    <experiments>3</experiments>
</comment>
<comment type="interaction">
    <interactant intactId="EBI-2806671">
        <id>P23769</id>
    </interactant>
    <interactant intactId="EBI-18394498">
        <id>Q8IUC3</id>
        <label>KRTAP7-1</label>
    </interactant>
    <organismsDiffer>false</organismsDiffer>
    <experiments>3</experiments>
</comment>
<comment type="interaction">
    <interactant intactId="EBI-2806671">
        <id>P23769</id>
    </interactant>
    <interactant intactId="EBI-10261141">
        <id>Q8IUC2</id>
        <label>KRTAP8-1</label>
    </interactant>
    <organismsDiffer>false</organismsDiffer>
    <experiments>3</experiments>
</comment>
<comment type="interaction">
    <interactant intactId="EBI-2806671">
        <id>P23769</id>
    </interactant>
    <interactant intactId="EBI-724076">
        <id>Q99750</id>
        <label>MDFI</label>
    </interactant>
    <organismsDiffer>false</organismsDiffer>
    <experiments>4</experiments>
</comment>
<comment type="interaction">
    <interactant intactId="EBI-2806671">
        <id>P23769</id>
    </interactant>
    <interactant intactId="EBI-6447480">
        <id>P35548</id>
        <label>MSX2</label>
    </interactant>
    <organismsDiffer>false</organismsDiffer>
    <experiments>3</experiments>
</comment>
<comment type="interaction">
    <interactant intactId="EBI-2806671">
        <id>P23769</id>
    </interactant>
    <interactant intactId="EBI-945833">
        <id>Q7Z3S9</id>
        <label>NOTCH2NLA</label>
    </interactant>
    <organismsDiffer>false</organismsDiffer>
    <experiments>4</experiments>
</comment>
<comment type="interaction">
    <interactant intactId="EBI-2806671">
        <id>P23769</id>
    </interactant>
    <interactant intactId="EBI-10172814">
        <id>P86479</id>
        <label>PRR20C</label>
    </interactant>
    <organismsDiffer>false</organismsDiffer>
    <experiments>3</experiments>
</comment>
<comment type="interaction">
    <interactant intactId="EBI-2806671">
        <id>P23769</id>
    </interactant>
    <interactant intactId="EBI-348380">
        <id>P25788</id>
        <label>PSMA3</label>
    </interactant>
    <organismsDiffer>false</organismsDiffer>
    <experiments>4</experiments>
</comment>
<comment type="interaction">
    <interactant intactId="EBI-2806671">
        <id>P23769</id>
    </interactant>
    <interactant intactId="EBI-740343">
        <id>Q93062-3</id>
        <label>RBPMS</label>
    </interactant>
    <organismsDiffer>false</organismsDiffer>
    <experiments>3</experiments>
</comment>
<comment type="interaction">
    <interactant intactId="EBI-2806671">
        <id>P23769</id>
    </interactant>
    <interactant intactId="EBI-347263">
        <id>Q13485</id>
        <label>SMAD4</label>
    </interactant>
    <organismsDiffer>false</organismsDiffer>
    <experiments>5</experiments>
</comment>
<comment type="interaction">
    <interactant intactId="EBI-2806671">
        <id>P23769</id>
    </interactant>
    <interactant intactId="EBI-2293548">
        <id>P17947</id>
        <label>SPI1</label>
    </interactant>
    <organismsDiffer>false</organismsDiffer>
    <experiments>4</experiments>
</comment>
<comment type="interaction">
    <interactant intactId="EBI-2806671">
        <id>P23769</id>
    </interactant>
    <interactant intactId="EBI-359224">
        <id>Q13077</id>
        <label>TRAF1</label>
    </interactant>
    <organismsDiffer>false</organismsDiffer>
    <experiments>3</experiments>
</comment>
<comment type="interaction">
    <interactant intactId="EBI-2806671">
        <id>P23769</id>
    </interactant>
    <interactant intactId="EBI-740098">
        <id>P36406</id>
        <label>TRIM23</label>
    </interactant>
    <organismsDiffer>false</organismsDiffer>
    <experiments>4</experiments>
</comment>
<comment type="interaction">
    <interactant intactId="EBI-2806671">
        <id>P23769</id>
    </interactant>
    <interactant intactId="EBI-3903256">
        <id>P25801</id>
        <label>Lmo2</label>
    </interactant>
    <organismsDiffer>true</organismsDiffer>
    <experiments>3</experiments>
</comment>
<comment type="interaction">
    <interactant intactId="EBI-21856389">
        <id>P23769-2</id>
    </interactant>
    <interactant intactId="EBI-25837549">
        <id>P28329-3</id>
        <label>CHAT</label>
    </interactant>
    <organismsDiffer>false</organismsDiffer>
    <experiments>3</experiments>
</comment>
<comment type="interaction">
    <interactant intactId="EBI-21856389">
        <id>P23769-2</id>
    </interactant>
    <interactant intactId="EBI-348399">
        <id>P22607</id>
        <label>FGFR3</label>
    </interactant>
    <organismsDiffer>false</organismsDiffer>
    <experiments>3</experiments>
</comment>
<comment type="interaction">
    <interactant intactId="EBI-21856389">
        <id>P23769-2</id>
    </interactant>
    <interactant intactId="EBI-747754">
        <id>P28799</id>
        <label>GRN</label>
    </interactant>
    <organismsDiffer>false</organismsDiffer>
    <experiments>3</experiments>
</comment>
<comment type="interaction">
    <interactant intactId="EBI-21856389">
        <id>P23769-2</id>
    </interactant>
    <interactant intactId="EBI-396669">
        <id>Q9Y3C5</id>
        <label>RNF11</label>
    </interactant>
    <organismsDiffer>false</organismsDiffer>
    <experiments>3</experiments>
</comment>
<comment type="interaction">
    <interactant intactId="EBI-21856389">
        <id>P23769-2</id>
    </interactant>
    <interactant intactId="EBI-720609">
        <id>O76024</id>
        <label>WFS1</label>
    </interactant>
    <organismsDiffer>false</organismsDiffer>
    <experiments>3</experiments>
</comment>
<comment type="subcellular location">
    <subcellularLocation>
        <location>Nucleus</location>
    </subcellularLocation>
</comment>
<comment type="alternative products">
    <event type="alternative splicing"/>
    <isoform>
        <id>P23769-1</id>
        <name>1</name>
        <sequence type="displayed"/>
    </isoform>
    <isoform>
        <id>P23769-2</id>
        <name>2</name>
        <sequence type="described" ref="VSP_041126"/>
    </isoform>
</comment>
<comment type="tissue specificity">
    <text>Endothelial cells.</text>
</comment>
<comment type="disease" evidence="6">
    <disease id="DI-03212">
        <name>Immunodeficiency 21</name>
        <acronym>IMD21</acronym>
        <description>An immunodeficiency disease characterized by profoundly decreased or absent monocytes, B-lymphocytes, natural killer lymphocytes, and circulating and tissue dendritic cells, with little or no effect on T-cell numbers. Clinical features of DCML include susceptibility to disseminated non-tuberculous mycobacterial infections, papillomavirus infections, opportunistic fungal infections, and pulmonary alveolar proteinosis. Bone marrow hypocellularity and dysplasia of myeloid, erythroid, and megakaryocytic lineages are present in most patients, as are karyotypic abnormalities, including monosomy 7 and trisomy 8. This syndrome links susceptibility to mycobacterial, viral, and fungal infections with malignancy and can be transmitted in an autosomal dominant pattern.</description>
        <dbReference type="MIM" id="614172"/>
    </disease>
    <text>The disease is caused by variants affecting the gene represented in this entry.</text>
</comment>
<comment type="disease" evidence="7">
    <disease id="DI-03299">
        <name>Lymphedema, primary, with myelodysplasia</name>
        <acronym>LMPM</acronym>
        <description>A chronic disabling condition characterized by swelling of the extremities due to altered lymphatic flow, associated with myelodysplasia. Patients with lymphedema suffer from recurrent local infections, and physical impairment.</description>
        <dbReference type="MIM" id="614038"/>
    </disease>
    <text>The disease is caused by variants affecting the gene represented in this entry.</text>
</comment>
<comment type="disease" evidence="8">
    <disease id="DI-03291">
        <name>Myelodysplastic syndrome</name>
        <acronym>MDS</acronym>
        <description>A heterogeneous group of closely related clonal hematopoietic disorders. All are characterized by a hypercellular or hypocellular bone marrow with impaired morphology and maturation, dysplasia of the myeloid, megakaryocytic and/or erythroid lineages, and peripheral blood cytopenias resulting from ineffective blood cell production. Included diseases are: refractory anemia (RA), refractory anemia with ringed sideroblasts (RARS), refractory anemia with excess blasts (RAEB), refractory cytopenia with multilineage dysplasia and ringed sideroblasts (RCMD-RS); chronic myelomonocytic leukemia (CMML) is a myelodysplastic/myeloproliferative disease. MDS is considered a premalignant condition in a subgroup of patients that often progresses to acute myeloid leukemia (AML).</description>
        <dbReference type="MIM" id="614286"/>
    </disease>
    <text>The disease is caused by variants affecting the gene represented in this entry.</text>
</comment>
<comment type="sequence caution" evidence="12">
    <conflict type="miscellaneous discrepancy">
        <sequence resource="EMBL-CDS" id="AAA35869"/>
    </conflict>
    <text>Several sequencing errors.</text>
</comment>
<comment type="online information" name="Atlas of Genetics and Cytogenetics in Oncology and Haematology">
    <link uri="https://atlasgeneticsoncology.org/gene/44160/GATA2"/>
</comment>
<organism>
    <name type="scientific">Homo sapiens</name>
    <name type="common">Human</name>
    <dbReference type="NCBI Taxonomy" id="9606"/>
    <lineage>
        <taxon>Eukaryota</taxon>
        <taxon>Metazoa</taxon>
        <taxon>Chordata</taxon>
        <taxon>Craniata</taxon>
        <taxon>Vertebrata</taxon>
        <taxon>Euteleostomi</taxon>
        <taxon>Mammalia</taxon>
        <taxon>Eutheria</taxon>
        <taxon>Euarchontoglires</taxon>
        <taxon>Primates</taxon>
        <taxon>Haplorrhini</taxon>
        <taxon>Catarrhini</taxon>
        <taxon>Hominidae</taxon>
        <taxon>Homo</taxon>
    </lineage>
</organism>
<feature type="chain" id="PRO_0000083403" description="Endothelial transcription factor GATA-2">
    <location>
        <begin position="1"/>
        <end position="480"/>
    </location>
</feature>
<feature type="zinc finger region" description="GATA-type 1" evidence="2">
    <location>
        <begin position="295"/>
        <end position="319"/>
    </location>
</feature>
<feature type="zinc finger region" description="GATA-type 2" evidence="2">
    <location>
        <begin position="349"/>
        <end position="373"/>
    </location>
</feature>
<feature type="region of interest" description="Disordered" evidence="3">
    <location>
        <begin position="119"/>
        <end position="209"/>
    </location>
</feature>
<feature type="region of interest" description="Disordered" evidence="3">
    <location>
        <begin position="448"/>
        <end position="480"/>
    </location>
</feature>
<feature type="compositionally biased region" description="Gly residues" evidence="3">
    <location>
        <begin position="143"/>
        <end position="153"/>
    </location>
</feature>
<feature type="compositionally biased region" description="Low complexity" evidence="3">
    <location>
        <begin position="185"/>
        <end position="203"/>
    </location>
</feature>
<feature type="modified residue" description="Phosphoserine" evidence="13">
    <location>
        <position position="73"/>
    </location>
</feature>
<feature type="modified residue" description="Asymmetric dimethylarginine" evidence="14">
    <location>
        <position position="86"/>
    </location>
</feature>
<feature type="modified residue" description="Phosphoserine" evidence="13">
    <location>
        <position position="192"/>
    </location>
</feature>
<feature type="cross-link" description="Glycyl lysine isopeptide (Lys-Gly) (interchain with G-Cter in SUMO2)" evidence="15">
    <location>
        <position position="389"/>
    </location>
</feature>
<feature type="splice variant" id="VSP_041126" description="In isoform 2." evidence="11">
    <location>
        <begin position="340"/>
        <end position="353"/>
    </location>
</feature>
<feature type="sequence variant" id="VAR_055004" description="In dbSNP:rs2335052." evidence="4 5 10">
    <original>A</original>
    <variation>T</variation>
    <location>
        <position position="164"/>
    </location>
</feature>
<feature type="sequence variant" id="VAR_055005" description="In dbSNP:rs35079193.">
    <original>T</original>
    <variation>N</variation>
    <location>
        <position position="235"/>
    </location>
</feature>
<feature type="sequence variant" id="VAR_066405" description="In IMD21; dbSNP:rs387906630." evidence="6">
    <original>P</original>
    <variation>L</variation>
    <location>
        <position position="254"/>
    </location>
</feature>
<feature type="sequence variant" id="VAR_066406" description="In IMD21 and MDS; dbSNP:rs387906631." evidence="6 8">
    <original>T</original>
    <variation>M</variation>
    <location>
        <position position="354"/>
    </location>
</feature>
<feature type="sequence variant" id="VAR_066643" description="In MDS." evidence="8">
    <location>
        <position position="355"/>
    </location>
</feature>
<feature type="sequence variant" id="VAR_066644" description="In LMPM." evidence="7">
    <original>R</original>
    <variation>P</variation>
    <location>
        <position position="361"/>
    </location>
</feature>
<feature type="sequence variant" id="VAR_066645" description="In LMPM; dbSNP:rs387906633." evidence="7">
    <original>C</original>
    <variation>R</variation>
    <location>
        <position position="373"/>
    </location>
</feature>
<feature type="sequence variant" id="VAR_066407" description="In IMD21; dbSNP:rs387906629." evidence="6">
    <original>R</original>
    <variation>W</variation>
    <location>
        <position position="398"/>
    </location>
</feature>
<feature type="sequence conflict" description="In Ref. 1; AAA35868." evidence="12" ref="1">
    <original>R</original>
    <variation>G</variation>
    <location>
        <position position="9"/>
    </location>
</feature>
<feature type="sequence conflict" description="In Ref. 1; AAA35868." evidence="12" ref="1">
    <original>QH</original>
    <variation>HD</variation>
    <location>
        <begin position="20"/>
        <end position="21"/>
    </location>
</feature>
<feature type="sequence conflict" description="In Ref. 1; AAA35868." evidence="12" ref="1">
    <original>QL</original>
    <variation>HV</variation>
    <location>
        <begin position="38"/>
        <end position="39"/>
    </location>
</feature>
<feature type="sequence conflict" description="In Ref. 1; AAA35868." evidence="12" ref="1">
    <original>R</original>
    <variation>A</variation>
    <location>
        <position position="69"/>
    </location>
</feature>
<feature type="sequence conflict" description="In Ref. 1; AAA35868." evidence="12" ref="1">
    <original>G</original>
    <variation>S</variation>
    <location>
        <position position="82"/>
    </location>
</feature>
<feature type="strand" evidence="17">
    <location>
        <begin position="291"/>
        <end position="293"/>
    </location>
</feature>
<feature type="strand" evidence="17">
    <location>
        <begin position="296"/>
        <end position="298"/>
    </location>
</feature>
<feature type="strand" evidence="17">
    <location>
        <begin position="301"/>
        <end position="310"/>
    </location>
</feature>
<feature type="helix" evidence="17">
    <location>
        <begin position="317"/>
        <end position="322"/>
    </location>
</feature>
<feature type="turn" evidence="17">
    <location>
        <begin position="323"/>
        <end position="325"/>
    </location>
</feature>
<feature type="turn" evidence="16">
    <location>
        <begin position="350"/>
        <end position="352"/>
    </location>
</feature>
<feature type="helix" evidence="16">
    <location>
        <begin position="371"/>
        <end position="380"/>
    </location>
</feature>
<feature type="strand" evidence="16">
    <location>
        <begin position="386"/>
        <end position="389"/>
    </location>
</feature>
<proteinExistence type="evidence at protein level"/>
<reference key="1">
    <citation type="journal article" date="1991" name="J. Biol. Chem.">
        <title>Cloning of the GATA-binding protein that regulates endothelin-1 gene expression in endothelial cells.</title>
        <authorList>
            <person name="Lee M.-E."/>
            <person name="Temizer D.T."/>
            <person name="Clifford J.A."/>
            <person name="Quertermous T."/>
        </authorList>
    </citation>
    <scope>NUCLEOTIDE SEQUENCE [MRNA] (ISOFORM 1)</scope>
</reference>
<reference key="2">
    <citation type="journal article" date="1992" name="J. Biol. Chem.">
        <title>Human transcription factor GATA-2. Evidence for regulation of preproendothelin-1 gene expression in endothelial cells.</title>
        <authorList>
            <person name="Dorfman D.M."/>
            <person name="Wilson D.B."/>
            <person name="Bruns G.A.P."/>
            <person name="Orkin S.H."/>
        </authorList>
    </citation>
    <scope>NUCLEOTIDE SEQUENCE [MRNA] (ISOFORM 1)</scope>
    <source>
        <tissue>Endothelial cell</tissue>
    </source>
</reference>
<reference key="3">
    <citation type="submission" date="2003-05" db="EMBL/GenBank/DDBJ databases">
        <title>Cloning of human full-length CDSs in BD Creator(TM) system donor vector.</title>
        <authorList>
            <person name="Kalnine N."/>
            <person name="Chen X."/>
            <person name="Rolfs A."/>
            <person name="Halleck A."/>
            <person name="Hines L."/>
            <person name="Eisenstein S."/>
            <person name="Koundinya M."/>
            <person name="Raphael J."/>
            <person name="Moreira D."/>
            <person name="Kelley T."/>
            <person name="LaBaer J."/>
            <person name="Lin Y."/>
            <person name="Phelan M."/>
            <person name="Farmer A."/>
        </authorList>
    </citation>
    <scope>NUCLEOTIDE SEQUENCE [LARGE SCALE MRNA] (ISOFORM 1)</scope>
    <scope>VARIANT THR-164</scope>
</reference>
<reference key="4">
    <citation type="journal article" date="2004" name="Nat. Genet.">
        <title>Complete sequencing and characterization of 21,243 full-length human cDNAs.</title>
        <authorList>
            <person name="Ota T."/>
            <person name="Suzuki Y."/>
            <person name="Nishikawa T."/>
            <person name="Otsuki T."/>
            <person name="Sugiyama T."/>
            <person name="Irie R."/>
            <person name="Wakamatsu A."/>
            <person name="Hayashi K."/>
            <person name="Sato H."/>
            <person name="Nagai K."/>
            <person name="Kimura K."/>
            <person name="Makita H."/>
            <person name="Sekine M."/>
            <person name="Obayashi M."/>
            <person name="Nishi T."/>
            <person name="Shibahara T."/>
            <person name="Tanaka T."/>
            <person name="Ishii S."/>
            <person name="Yamamoto J."/>
            <person name="Saito K."/>
            <person name="Kawai Y."/>
            <person name="Isono Y."/>
            <person name="Nakamura Y."/>
            <person name="Nagahari K."/>
            <person name="Murakami K."/>
            <person name="Yasuda T."/>
            <person name="Iwayanagi T."/>
            <person name="Wagatsuma M."/>
            <person name="Shiratori A."/>
            <person name="Sudo H."/>
            <person name="Hosoiri T."/>
            <person name="Kaku Y."/>
            <person name="Kodaira H."/>
            <person name="Kondo H."/>
            <person name="Sugawara M."/>
            <person name="Takahashi M."/>
            <person name="Kanda K."/>
            <person name="Yokoi T."/>
            <person name="Furuya T."/>
            <person name="Kikkawa E."/>
            <person name="Omura Y."/>
            <person name="Abe K."/>
            <person name="Kamihara K."/>
            <person name="Katsuta N."/>
            <person name="Sato K."/>
            <person name="Tanikawa M."/>
            <person name="Yamazaki M."/>
            <person name="Ninomiya K."/>
            <person name="Ishibashi T."/>
            <person name="Yamashita H."/>
            <person name="Murakawa K."/>
            <person name="Fujimori K."/>
            <person name="Tanai H."/>
            <person name="Kimata M."/>
            <person name="Watanabe M."/>
            <person name="Hiraoka S."/>
            <person name="Chiba Y."/>
            <person name="Ishida S."/>
            <person name="Ono Y."/>
            <person name="Takiguchi S."/>
            <person name="Watanabe S."/>
            <person name="Yosida M."/>
            <person name="Hotuta T."/>
            <person name="Kusano J."/>
            <person name="Kanehori K."/>
            <person name="Takahashi-Fujii A."/>
            <person name="Hara H."/>
            <person name="Tanase T.-O."/>
            <person name="Nomura Y."/>
            <person name="Togiya S."/>
            <person name="Komai F."/>
            <person name="Hara R."/>
            <person name="Takeuchi K."/>
            <person name="Arita M."/>
            <person name="Imose N."/>
            <person name="Musashino K."/>
            <person name="Yuuki H."/>
            <person name="Oshima A."/>
            <person name="Sasaki N."/>
            <person name="Aotsuka S."/>
            <person name="Yoshikawa Y."/>
            <person name="Matsunawa H."/>
            <person name="Ichihara T."/>
            <person name="Shiohata N."/>
            <person name="Sano S."/>
            <person name="Moriya S."/>
            <person name="Momiyama H."/>
            <person name="Satoh N."/>
            <person name="Takami S."/>
            <person name="Terashima Y."/>
            <person name="Suzuki O."/>
            <person name="Nakagawa S."/>
            <person name="Senoh A."/>
            <person name="Mizoguchi H."/>
            <person name="Goto Y."/>
            <person name="Shimizu F."/>
            <person name="Wakebe H."/>
            <person name="Hishigaki H."/>
            <person name="Watanabe T."/>
            <person name="Sugiyama A."/>
            <person name="Takemoto M."/>
            <person name="Kawakami B."/>
            <person name="Yamazaki M."/>
            <person name="Watanabe K."/>
            <person name="Kumagai A."/>
            <person name="Itakura S."/>
            <person name="Fukuzumi Y."/>
            <person name="Fujimori Y."/>
            <person name="Komiyama M."/>
            <person name="Tashiro H."/>
            <person name="Tanigami A."/>
            <person name="Fujiwara T."/>
            <person name="Ono T."/>
            <person name="Yamada K."/>
            <person name="Fujii Y."/>
            <person name="Ozaki K."/>
            <person name="Hirao M."/>
            <person name="Ohmori Y."/>
            <person name="Kawabata A."/>
            <person name="Hikiji T."/>
            <person name="Kobatake N."/>
            <person name="Inagaki H."/>
            <person name="Ikema Y."/>
            <person name="Okamoto S."/>
            <person name="Okitani R."/>
            <person name="Kawakami T."/>
            <person name="Noguchi S."/>
            <person name="Itoh T."/>
            <person name="Shigeta K."/>
            <person name="Senba T."/>
            <person name="Matsumura K."/>
            <person name="Nakajima Y."/>
            <person name="Mizuno T."/>
            <person name="Morinaga M."/>
            <person name="Sasaki M."/>
            <person name="Togashi T."/>
            <person name="Oyama M."/>
            <person name="Hata H."/>
            <person name="Watanabe M."/>
            <person name="Komatsu T."/>
            <person name="Mizushima-Sugano J."/>
            <person name="Satoh T."/>
            <person name="Shirai Y."/>
            <person name="Takahashi Y."/>
            <person name="Nakagawa K."/>
            <person name="Okumura K."/>
            <person name="Nagase T."/>
            <person name="Nomura N."/>
            <person name="Kikuchi H."/>
            <person name="Masuho Y."/>
            <person name="Yamashita R."/>
            <person name="Nakai K."/>
            <person name="Yada T."/>
            <person name="Nakamura Y."/>
            <person name="Ohara O."/>
            <person name="Isogai T."/>
            <person name="Sugano S."/>
        </authorList>
    </citation>
    <scope>NUCLEOTIDE SEQUENCE [LARGE SCALE MRNA] (ISOFORM 1)</scope>
    <scope>VARIANT THR-164</scope>
    <source>
        <tissue>Placenta</tissue>
    </source>
</reference>
<reference key="5">
    <citation type="journal article" date="2006" name="Nature">
        <title>The DNA sequence, annotation and analysis of human chromosome 3.</title>
        <authorList>
            <person name="Muzny D.M."/>
            <person name="Scherer S.E."/>
            <person name="Kaul R."/>
            <person name="Wang J."/>
            <person name="Yu J."/>
            <person name="Sudbrak R."/>
            <person name="Buhay C.J."/>
            <person name="Chen R."/>
            <person name="Cree A."/>
            <person name="Ding Y."/>
            <person name="Dugan-Rocha S."/>
            <person name="Gill R."/>
            <person name="Gunaratne P."/>
            <person name="Harris R.A."/>
            <person name="Hawes A.C."/>
            <person name="Hernandez J."/>
            <person name="Hodgson A.V."/>
            <person name="Hume J."/>
            <person name="Jackson A."/>
            <person name="Khan Z.M."/>
            <person name="Kovar-Smith C."/>
            <person name="Lewis L.R."/>
            <person name="Lozado R.J."/>
            <person name="Metzker M.L."/>
            <person name="Milosavljevic A."/>
            <person name="Miner G.R."/>
            <person name="Morgan M.B."/>
            <person name="Nazareth L.V."/>
            <person name="Scott G."/>
            <person name="Sodergren E."/>
            <person name="Song X.-Z."/>
            <person name="Steffen D."/>
            <person name="Wei S."/>
            <person name="Wheeler D.A."/>
            <person name="Wright M.W."/>
            <person name="Worley K.C."/>
            <person name="Yuan Y."/>
            <person name="Zhang Z."/>
            <person name="Adams C.Q."/>
            <person name="Ansari-Lari M.A."/>
            <person name="Ayele M."/>
            <person name="Brown M.J."/>
            <person name="Chen G."/>
            <person name="Chen Z."/>
            <person name="Clendenning J."/>
            <person name="Clerc-Blankenburg K.P."/>
            <person name="Chen R."/>
            <person name="Chen Z."/>
            <person name="Davis C."/>
            <person name="Delgado O."/>
            <person name="Dinh H.H."/>
            <person name="Dong W."/>
            <person name="Draper H."/>
            <person name="Ernst S."/>
            <person name="Fu G."/>
            <person name="Gonzalez-Garay M.L."/>
            <person name="Garcia D.K."/>
            <person name="Gillett W."/>
            <person name="Gu J."/>
            <person name="Hao B."/>
            <person name="Haugen E."/>
            <person name="Havlak P."/>
            <person name="He X."/>
            <person name="Hennig S."/>
            <person name="Hu S."/>
            <person name="Huang W."/>
            <person name="Jackson L.R."/>
            <person name="Jacob L.S."/>
            <person name="Kelly S.H."/>
            <person name="Kube M."/>
            <person name="Levy R."/>
            <person name="Li Z."/>
            <person name="Liu B."/>
            <person name="Liu J."/>
            <person name="Liu W."/>
            <person name="Lu J."/>
            <person name="Maheshwari M."/>
            <person name="Nguyen B.-V."/>
            <person name="Okwuonu G.O."/>
            <person name="Palmeiri A."/>
            <person name="Pasternak S."/>
            <person name="Perez L.M."/>
            <person name="Phelps K.A."/>
            <person name="Plopper F.J."/>
            <person name="Qiang B."/>
            <person name="Raymond C."/>
            <person name="Rodriguez R."/>
            <person name="Saenphimmachak C."/>
            <person name="Santibanez J."/>
            <person name="Shen H."/>
            <person name="Shen Y."/>
            <person name="Subramanian S."/>
            <person name="Tabor P.E."/>
            <person name="Verduzco D."/>
            <person name="Waldron L."/>
            <person name="Wang J."/>
            <person name="Wang J."/>
            <person name="Wang Q."/>
            <person name="Williams G.A."/>
            <person name="Wong G.K.-S."/>
            <person name="Yao Z."/>
            <person name="Zhang J."/>
            <person name="Zhang X."/>
            <person name="Zhao G."/>
            <person name="Zhou J."/>
            <person name="Zhou Y."/>
            <person name="Nelson D."/>
            <person name="Lehrach H."/>
            <person name="Reinhardt R."/>
            <person name="Naylor S.L."/>
            <person name="Yang H."/>
            <person name="Olson M."/>
            <person name="Weinstock G."/>
            <person name="Gibbs R.A."/>
        </authorList>
    </citation>
    <scope>NUCLEOTIDE SEQUENCE [LARGE SCALE GENOMIC DNA]</scope>
</reference>
<reference key="6">
    <citation type="submission" date="2005-09" db="EMBL/GenBank/DDBJ databases">
        <authorList>
            <person name="Mural R.J."/>
            <person name="Istrail S."/>
            <person name="Sutton G.G."/>
            <person name="Florea L."/>
            <person name="Halpern A.L."/>
            <person name="Mobarry C.M."/>
            <person name="Lippert R."/>
            <person name="Walenz B."/>
            <person name="Shatkay H."/>
            <person name="Dew I."/>
            <person name="Miller J.R."/>
            <person name="Flanigan M.J."/>
            <person name="Edwards N.J."/>
            <person name="Bolanos R."/>
            <person name="Fasulo D."/>
            <person name="Halldorsson B.V."/>
            <person name="Hannenhalli S."/>
            <person name="Turner R."/>
            <person name="Yooseph S."/>
            <person name="Lu F."/>
            <person name="Nusskern D.R."/>
            <person name="Shue B.C."/>
            <person name="Zheng X.H."/>
            <person name="Zhong F."/>
            <person name="Delcher A.L."/>
            <person name="Huson D.H."/>
            <person name="Kravitz S.A."/>
            <person name="Mouchard L."/>
            <person name="Reinert K."/>
            <person name="Remington K.A."/>
            <person name="Clark A.G."/>
            <person name="Waterman M.S."/>
            <person name="Eichler E.E."/>
            <person name="Adams M.D."/>
            <person name="Hunkapiller M.W."/>
            <person name="Myers E.W."/>
            <person name="Venter J.C."/>
        </authorList>
    </citation>
    <scope>NUCLEOTIDE SEQUENCE [LARGE SCALE GENOMIC DNA]</scope>
</reference>
<reference key="7">
    <citation type="journal article" date="2004" name="Genome Res.">
        <title>The status, quality, and expansion of the NIH full-length cDNA project: the Mammalian Gene Collection (MGC).</title>
        <authorList>
            <consortium name="The MGC Project Team"/>
        </authorList>
    </citation>
    <scope>NUCLEOTIDE SEQUENCE [LARGE SCALE MRNA] (ISOFORMS 1 AND 2)</scope>
    <scope>VARIANT THR-164</scope>
    <source>
        <tissue>Brain</tissue>
        <tissue>Placenta</tissue>
    </source>
</reference>
<reference key="8">
    <citation type="journal article" date="2013" name="J. Proteome Res.">
        <title>Toward a comprehensive characterization of a human cancer cell phosphoproteome.</title>
        <authorList>
            <person name="Zhou H."/>
            <person name="Di Palma S."/>
            <person name="Preisinger C."/>
            <person name="Peng M."/>
            <person name="Polat A.N."/>
            <person name="Heck A.J."/>
            <person name="Mohammed S."/>
        </authorList>
    </citation>
    <scope>PHOSPHORYLATION [LARGE SCALE ANALYSIS] AT SER-73 AND SER-192</scope>
    <scope>IDENTIFICATION BY MASS SPECTROMETRY [LARGE SCALE ANALYSIS]</scope>
    <source>
        <tissue>Cervix carcinoma</tissue>
        <tissue>Erythroleukemia</tissue>
    </source>
</reference>
<reference key="9">
    <citation type="journal article" date="2013" name="Nucleic Acids Res.">
        <title>CCAR1 promotes chromatin loading of androgen receptor (AR) transcription complex by stabilizing the association between AR and GATA2.</title>
        <authorList>
            <person name="Seo W.Y."/>
            <person name="Jeong B.C."/>
            <person name="Yu E.J."/>
            <person name="Kim H.J."/>
            <person name="Kim S.H."/>
            <person name="Lim J.E."/>
            <person name="Kwon G.Y."/>
            <person name="Lee H.M."/>
            <person name="Kim J.H."/>
        </authorList>
    </citation>
    <scope>INTERACTION WITH AR AND CCAR1</scope>
</reference>
<reference key="10">
    <citation type="journal article" date="2014" name="Mol. Cell. Proteomics">
        <title>Immunoaffinity enrichment and mass spectrometry analysis of protein methylation.</title>
        <authorList>
            <person name="Guo A."/>
            <person name="Gu H."/>
            <person name="Zhou J."/>
            <person name="Mulhern D."/>
            <person name="Wang Y."/>
            <person name="Lee K.A."/>
            <person name="Yang V."/>
            <person name="Aguiar M."/>
            <person name="Kornhauser J."/>
            <person name="Jia X."/>
            <person name="Ren J."/>
            <person name="Beausoleil S.A."/>
            <person name="Silva J.C."/>
            <person name="Vemulapalli V."/>
            <person name="Bedford M.T."/>
            <person name="Comb M.J."/>
        </authorList>
    </citation>
    <scope>METHYLATION [LARGE SCALE ANALYSIS] AT ARG-86</scope>
    <scope>IDENTIFICATION BY MASS SPECTROMETRY [LARGE SCALE ANALYSIS]</scope>
    <source>
        <tissue>Colon carcinoma</tissue>
    </source>
</reference>
<reference key="11">
    <citation type="journal article" date="2017" name="Nat. Struct. Mol. Biol.">
        <title>Site-specific mapping of the human SUMO proteome reveals co-modification with phosphorylation.</title>
        <authorList>
            <person name="Hendriks I.A."/>
            <person name="Lyon D."/>
            <person name="Young C."/>
            <person name="Jensen L.J."/>
            <person name="Vertegaal A.C."/>
            <person name="Nielsen M.L."/>
        </authorList>
    </citation>
    <scope>SUMOYLATION [LARGE SCALE ANALYSIS] AT LYS-389</scope>
    <scope>IDENTIFICATION BY MASS SPECTROMETRY [LARGE SCALE ANALYSIS]</scope>
</reference>
<reference key="12">
    <citation type="journal article" date="2011" name="Blood">
        <title>Mutations in GATA2 are associated with the autosomal dominant and sporadic monocytopenia and mycobacterial infection (MonoMAC) syndrome.</title>
        <authorList>
            <person name="Hsu A.P."/>
            <person name="Sampaio E.P."/>
            <person name="Khan J."/>
            <person name="Calvo K.R."/>
            <person name="Lemieux J.E."/>
            <person name="Patel S.Y."/>
            <person name="Frucht D.M."/>
            <person name="Vinh D.C."/>
            <person name="Auth R.D."/>
            <person name="Freeman A.F."/>
            <person name="Olivier K.N."/>
            <person name="Uzel G."/>
            <person name="Zerbe C.S."/>
            <person name="Spalding C."/>
            <person name="Pittaluga S."/>
            <person name="Raffeld M."/>
            <person name="Kuhns D.B."/>
            <person name="Ding L."/>
            <person name="Paulson M.L."/>
            <person name="Marciano B.E."/>
            <person name="Gea-Banacloche J.C."/>
            <person name="Orange J.S."/>
            <person name="Cuellar-Rodriguez J."/>
            <person name="Hickstein D.D."/>
            <person name="Holland S.M."/>
        </authorList>
    </citation>
    <scope>VARIANTS IMD21 LEU-254; MET-354 AND TRP-398</scope>
</reference>
<reference key="13">
    <citation type="journal article" date="2011" name="Nat. Genet.">
        <title>Mutations in GATA2 cause primary lymphedema associated with a predisposition to acute myeloid leukemia (Emberger syndrome).</title>
        <authorList>
            <person name="Ostergaard P."/>
            <person name="Simpson M.A."/>
            <person name="Connell F.C."/>
            <person name="Steward C.G."/>
            <person name="Brice G."/>
            <person name="Woollard W.J."/>
            <person name="Dafou D."/>
            <person name="Kilo T."/>
            <person name="Smithson S."/>
            <person name="Lunt P."/>
            <person name="Murday V.A."/>
            <person name="Hodgson S."/>
            <person name="Keenan R."/>
            <person name="Pilz D.T."/>
            <person name="Martinez-Corral I."/>
            <person name="Makinen T."/>
            <person name="Mortimer P.S."/>
            <person name="Jeffery S."/>
            <person name="Trembath R.C."/>
            <person name="Mansour S."/>
        </authorList>
    </citation>
    <scope>VARIANTS LMPM PRO-361 AND ARG-373</scope>
</reference>
<reference key="14">
    <citation type="journal article" date="2011" name="Nat. Genet.">
        <title>Heritable GATA2 mutations associated with familial myelodysplastic syndrome and acute myeloid leukemia.</title>
        <authorList>
            <person name="Hahn C.N."/>
            <person name="Chong C.E."/>
            <person name="Carmichael C.L."/>
            <person name="Wilkins E.J."/>
            <person name="Brautigan P.J."/>
            <person name="Li X.C."/>
            <person name="Babic M."/>
            <person name="Lin M."/>
            <person name="Carmagnac A."/>
            <person name="Lee Y.K."/>
            <person name="Kok C.H."/>
            <person name="Gagliardi L."/>
            <person name="Friend K.L."/>
            <person name="Ekert P.G."/>
            <person name="Butcher C.M."/>
            <person name="Brown A.L."/>
            <person name="Lewis I.D."/>
            <person name="To L.B."/>
            <person name="Timms A.E."/>
            <person name="Storek J."/>
            <person name="Moore S."/>
            <person name="Altree M."/>
            <person name="Escher R."/>
            <person name="Bardy P.G."/>
            <person name="Suthers G.K."/>
            <person name="D'Andrea R.J."/>
            <person name="Horwitz M.S."/>
            <person name="Scott H.S."/>
        </authorList>
    </citation>
    <scope>VARIANTS MDS MET-354 AND THR-355 DEL</scope>
</reference>
<sequence length="480" mass="50500">MEVAPEQPRWMAHPAVLNAQHPDSHHPGLAHNYMEPAQLLPPDEVDVFFNHLDSQGNPYYANPAHARARVSYSPAHARLTGGQMCRPHLLHSPGLPWLDGGKAALSAAAAHHHNPWTVSPFSKTPLHPSAAGGPGGPLSVYPGAGGGSGGGSGSSVASLTPTAAHSGSHLFGFPPTPPKEVSPDPSTTGAASPASSSAGGSAARGEDKDGVKYQVSLTESMKMESGSPLRPGLATMGTQPATHHPIPTYPSYVPAAAHDYSSGLFHPGGFLGGPASSFTPKQRSKARSCSEGRECVNCGATATPLWRRDGTGHYLCNACGLYHKMNGQNRPLIKPKRRLSAARRAGTCCANCQTTTTTLWRRNANGDPVCNACGLYYKLHNVNRPLTMKKEGIQTRNRKMSNKSKKSKKGAECFEELSKCMQEKSSPFSAAALAGHMAPVGHLPPFSHSGHILPTPTPIHPSSSLSFGHPHPSSMVTAMG</sequence>
<gene>
    <name type="primary">GATA2</name>
</gene>